<sequence>MTKKVTIIGAGLAGSEAAWQVANAGVPVDLYEMRPVKKTPAHQTENFAELVCSNSLRGNSLTNAVGVLKEEMRRLNSIIIGSADQTAVPAGGALAVDRDSFSETITEKIKSHPLITIKNEEITDIPEGIVIIATGPLTSESLSQKIQEFNGSEGFYFYDAAAPIIDKSTIDMDKVYLKSRYNKGEAAYLNCPMTEEEFNAFHEALVNAEVVPLRTFEKEKFFEGCMPIEVMAQRGIKTMLFGPMKPVGLEDPKTGKRPYAVIQLRQDNAAASLYNIVGFQTHLKWGEQKRVFRMIPGLENAEFVRYGVMHRNSFMNSPELLKPTYQSKKRDDLFFAGQMTGVEGYVESAASGLLAGINAARLAKGEEPIEFPRETTLGSMAYYITHAEGKHFQPMNANFGLFPELPERIRDKKERYEAIANRALDVQAQVIQSLD</sequence>
<name>TRMFO_ENTFA</name>
<feature type="chain" id="PRO_0000117243" description="Methylenetetrahydrofolate--tRNA-(uracil-5-)-methyltransferase TrmFO">
    <location>
        <begin position="1"/>
        <end position="435"/>
    </location>
</feature>
<feature type="binding site" evidence="1">
    <location>
        <begin position="9"/>
        <end position="14"/>
    </location>
    <ligand>
        <name>FAD</name>
        <dbReference type="ChEBI" id="CHEBI:57692"/>
    </ligand>
</feature>
<comment type="function">
    <text evidence="1">Catalyzes the folate-dependent formation of 5-methyl-uridine at position 54 (M-5-U54) in all tRNAs.</text>
</comment>
<comment type="catalytic activity">
    <reaction evidence="1">
        <text>uridine(54) in tRNA + (6R)-5,10-methylene-5,6,7,8-tetrahydrofolate + NADH + H(+) = 5-methyluridine(54) in tRNA + (6S)-5,6,7,8-tetrahydrofolate + NAD(+)</text>
        <dbReference type="Rhea" id="RHEA:16873"/>
        <dbReference type="Rhea" id="RHEA-COMP:10167"/>
        <dbReference type="Rhea" id="RHEA-COMP:10193"/>
        <dbReference type="ChEBI" id="CHEBI:15378"/>
        <dbReference type="ChEBI" id="CHEBI:15636"/>
        <dbReference type="ChEBI" id="CHEBI:57453"/>
        <dbReference type="ChEBI" id="CHEBI:57540"/>
        <dbReference type="ChEBI" id="CHEBI:57945"/>
        <dbReference type="ChEBI" id="CHEBI:65315"/>
        <dbReference type="ChEBI" id="CHEBI:74447"/>
        <dbReference type="EC" id="2.1.1.74"/>
    </reaction>
</comment>
<comment type="catalytic activity">
    <reaction evidence="1">
        <text>uridine(54) in tRNA + (6R)-5,10-methylene-5,6,7,8-tetrahydrofolate + NADPH + H(+) = 5-methyluridine(54) in tRNA + (6S)-5,6,7,8-tetrahydrofolate + NADP(+)</text>
        <dbReference type="Rhea" id="RHEA:62372"/>
        <dbReference type="Rhea" id="RHEA-COMP:10167"/>
        <dbReference type="Rhea" id="RHEA-COMP:10193"/>
        <dbReference type="ChEBI" id="CHEBI:15378"/>
        <dbReference type="ChEBI" id="CHEBI:15636"/>
        <dbReference type="ChEBI" id="CHEBI:57453"/>
        <dbReference type="ChEBI" id="CHEBI:57783"/>
        <dbReference type="ChEBI" id="CHEBI:58349"/>
        <dbReference type="ChEBI" id="CHEBI:65315"/>
        <dbReference type="ChEBI" id="CHEBI:74447"/>
        <dbReference type="EC" id="2.1.1.74"/>
    </reaction>
</comment>
<comment type="cofactor">
    <cofactor evidence="1">
        <name>FAD</name>
        <dbReference type="ChEBI" id="CHEBI:57692"/>
    </cofactor>
</comment>
<comment type="subcellular location">
    <subcellularLocation>
        <location evidence="1">Cytoplasm</location>
    </subcellularLocation>
</comment>
<comment type="similarity">
    <text evidence="1">Belongs to the MnmG family. TrmFO subfamily.</text>
</comment>
<evidence type="ECO:0000255" key="1">
    <source>
        <dbReference type="HAMAP-Rule" id="MF_01037"/>
    </source>
</evidence>
<organism>
    <name type="scientific">Enterococcus faecalis (strain ATCC 700802 / V583)</name>
    <dbReference type="NCBI Taxonomy" id="226185"/>
    <lineage>
        <taxon>Bacteria</taxon>
        <taxon>Bacillati</taxon>
        <taxon>Bacillota</taxon>
        <taxon>Bacilli</taxon>
        <taxon>Lactobacillales</taxon>
        <taxon>Enterococcaceae</taxon>
        <taxon>Enterococcus</taxon>
    </lineage>
</organism>
<accession>Q834K1</accession>
<reference key="1">
    <citation type="journal article" date="2003" name="Science">
        <title>Role of mobile DNA in the evolution of vancomycin-resistant Enterococcus faecalis.</title>
        <authorList>
            <person name="Paulsen I.T."/>
            <person name="Banerjei L."/>
            <person name="Myers G.S.A."/>
            <person name="Nelson K.E."/>
            <person name="Seshadri R."/>
            <person name="Read T.D."/>
            <person name="Fouts D.E."/>
            <person name="Eisen J.A."/>
            <person name="Gill S.R."/>
            <person name="Heidelberg J.F."/>
            <person name="Tettelin H."/>
            <person name="Dodson R.J."/>
            <person name="Umayam L.A."/>
            <person name="Brinkac L.M."/>
            <person name="Beanan M.J."/>
            <person name="Daugherty S.C."/>
            <person name="DeBoy R.T."/>
            <person name="Durkin S.A."/>
            <person name="Kolonay J.F."/>
            <person name="Madupu R."/>
            <person name="Nelson W.C."/>
            <person name="Vamathevan J.J."/>
            <person name="Tran B."/>
            <person name="Upton J."/>
            <person name="Hansen T."/>
            <person name="Shetty J."/>
            <person name="Khouri H.M."/>
            <person name="Utterback T.R."/>
            <person name="Radune D."/>
            <person name="Ketchum K.A."/>
            <person name="Dougherty B.A."/>
            <person name="Fraser C.M."/>
        </authorList>
    </citation>
    <scope>NUCLEOTIDE SEQUENCE [LARGE SCALE GENOMIC DNA]</scope>
    <source>
        <strain>ATCC 700802 / V583</strain>
    </source>
</reference>
<protein>
    <recommendedName>
        <fullName evidence="1">Methylenetetrahydrofolate--tRNA-(uracil-5-)-methyltransferase TrmFO</fullName>
        <ecNumber evidence="1">2.1.1.74</ecNumber>
    </recommendedName>
    <alternativeName>
        <fullName evidence="1">Folate-dependent tRNA (uracil-5-)-methyltransferase</fullName>
    </alternativeName>
    <alternativeName>
        <fullName evidence="1">Folate-dependent tRNA(M-5-U54)-methyltransferase</fullName>
    </alternativeName>
</protein>
<gene>
    <name evidence="1" type="primary">trmFO</name>
    <name type="synonym">gid</name>
    <name type="ordered locus">EF_1649</name>
</gene>
<dbReference type="EC" id="2.1.1.74" evidence="1"/>
<dbReference type="EMBL" id="AE016830">
    <property type="protein sequence ID" value="AAO81427.1"/>
    <property type="molecule type" value="Genomic_DNA"/>
</dbReference>
<dbReference type="RefSeq" id="NP_815357.1">
    <property type="nucleotide sequence ID" value="NC_004668.1"/>
</dbReference>
<dbReference type="RefSeq" id="WP_002357486.1">
    <property type="nucleotide sequence ID" value="NZ_KE136528.1"/>
</dbReference>
<dbReference type="SMR" id="Q834K1"/>
<dbReference type="STRING" id="226185.EF_1649"/>
<dbReference type="EnsemblBacteria" id="AAO81427">
    <property type="protein sequence ID" value="AAO81427"/>
    <property type="gene ID" value="EF_1649"/>
</dbReference>
<dbReference type="GeneID" id="60893947"/>
<dbReference type="KEGG" id="efa:EF1649"/>
<dbReference type="PATRIC" id="fig|226185.45.peg.1862"/>
<dbReference type="eggNOG" id="COG1206">
    <property type="taxonomic scope" value="Bacteria"/>
</dbReference>
<dbReference type="HOGENOM" id="CLU_033057_1_0_9"/>
<dbReference type="Proteomes" id="UP000001415">
    <property type="component" value="Chromosome"/>
</dbReference>
<dbReference type="GO" id="GO:0005829">
    <property type="term" value="C:cytosol"/>
    <property type="evidence" value="ECO:0007669"/>
    <property type="project" value="TreeGrafter"/>
</dbReference>
<dbReference type="GO" id="GO:0050660">
    <property type="term" value="F:flavin adenine dinucleotide binding"/>
    <property type="evidence" value="ECO:0007669"/>
    <property type="project" value="UniProtKB-UniRule"/>
</dbReference>
<dbReference type="GO" id="GO:0047151">
    <property type="term" value="F:tRNA (uracil(54)-C5)-methyltransferase activity, 5,10-methylenetetrahydrofolate-dependent"/>
    <property type="evidence" value="ECO:0007669"/>
    <property type="project" value="UniProtKB-UniRule"/>
</dbReference>
<dbReference type="GO" id="GO:0030488">
    <property type="term" value="P:tRNA methylation"/>
    <property type="evidence" value="ECO:0007669"/>
    <property type="project" value="TreeGrafter"/>
</dbReference>
<dbReference type="GO" id="GO:0002098">
    <property type="term" value="P:tRNA wobble uridine modification"/>
    <property type="evidence" value="ECO:0007669"/>
    <property type="project" value="TreeGrafter"/>
</dbReference>
<dbReference type="FunFam" id="3.50.50.60:FF:000035">
    <property type="entry name" value="Methylenetetrahydrofolate--tRNA-(uracil-5-)-methyltransferase TrmFO"/>
    <property type="match status" value="1"/>
</dbReference>
<dbReference type="FunFam" id="3.50.50.60:FF:000040">
    <property type="entry name" value="Methylenetetrahydrofolate--tRNA-(uracil-5-)-methyltransferase TrmFO"/>
    <property type="match status" value="1"/>
</dbReference>
<dbReference type="Gene3D" id="3.50.50.60">
    <property type="entry name" value="FAD/NAD(P)-binding domain"/>
    <property type="match status" value="2"/>
</dbReference>
<dbReference type="HAMAP" id="MF_01037">
    <property type="entry name" value="TrmFO"/>
    <property type="match status" value="1"/>
</dbReference>
<dbReference type="InterPro" id="IPR036188">
    <property type="entry name" value="FAD/NAD-bd_sf"/>
</dbReference>
<dbReference type="InterPro" id="IPR002218">
    <property type="entry name" value="MnmG-rel"/>
</dbReference>
<dbReference type="InterPro" id="IPR020595">
    <property type="entry name" value="MnmG-rel_CS"/>
</dbReference>
<dbReference type="InterPro" id="IPR040131">
    <property type="entry name" value="MnmG_N"/>
</dbReference>
<dbReference type="InterPro" id="IPR004417">
    <property type="entry name" value="TrmFO"/>
</dbReference>
<dbReference type="NCBIfam" id="TIGR00137">
    <property type="entry name" value="gid_trmFO"/>
    <property type="match status" value="1"/>
</dbReference>
<dbReference type="NCBIfam" id="NF003739">
    <property type="entry name" value="PRK05335.1"/>
    <property type="match status" value="1"/>
</dbReference>
<dbReference type="PANTHER" id="PTHR11806">
    <property type="entry name" value="GLUCOSE INHIBITED DIVISION PROTEIN A"/>
    <property type="match status" value="1"/>
</dbReference>
<dbReference type="PANTHER" id="PTHR11806:SF2">
    <property type="entry name" value="METHYLENETETRAHYDROFOLATE--TRNA-(URACIL-5-)-METHYLTRANSFERASE TRMFO"/>
    <property type="match status" value="1"/>
</dbReference>
<dbReference type="Pfam" id="PF01134">
    <property type="entry name" value="GIDA"/>
    <property type="match status" value="1"/>
</dbReference>
<dbReference type="SUPFAM" id="SSF51905">
    <property type="entry name" value="FAD/NAD(P)-binding domain"/>
    <property type="match status" value="1"/>
</dbReference>
<dbReference type="PROSITE" id="PS01281">
    <property type="entry name" value="GIDA_2"/>
    <property type="match status" value="1"/>
</dbReference>
<proteinExistence type="inferred from homology"/>
<keyword id="KW-0963">Cytoplasm</keyword>
<keyword id="KW-0274">FAD</keyword>
<keyword id="KW-0285">Flavoprotein</keyword>
<keyword id="KW-0489">Methyltransferase</keyword>
<keyword id="KW-0520">NAD</keyword>
<keyword id="KW-0521">NADP</keyword>
<keyword id="KW-1185">Reference proteome</keyword>
<keyword id="KW-0808">Transferase</keyword>
<keyword id="KW-0819">tRNA processing</keyword>